<dbReference type="EMBL" id="CP000097">
    <property type="protein sequence ID" value="ABB26939.1"/>
    <property type="status" value="ALT_INIT"/>
    <property type="molecule type" value="Genomic_DNA"/>
</dbReference>
<dbReference type="RefSeq" id="WP_011360733.1">
    <property type="nucleotide sequence ID" value="NC_007513.1"/>
</dbReference>
<dbReference type="SMR" id="Q3AW67"/>
<dbReference type="STRING" id="316279.Syncc9902_1981"/>
<dbReference type="KEGG" id="sye:Syncc9902_1981"/>
<dbReference type="eggNOG" id="COG0102">
    <property type="taxonomic scope" value="Bacteria"/>
</dbReference>
<dbReference type="HOGENOM" id="CLU_082184_2_2_3"/>
<dbReference type="OrthoDB" id="9801330at2"/>
<dbReference type="Proteomes" id="UP000002712">
    <property type="component" value="Chromosome"/>
</dbReference>
<dbReference type="GO" id="GO:0022625">
    <property type="term" value="C:cytosolic large ribosomal subunit"/>
    <property type="evidence" value="ECO:0007669"/>
    <property type="project" value="TreeGrafter"/>
</dbReference>
<dbReference type="GO" id="GO:0003729">
    <property type="term" value="F:mRNA binding"/>
    <property type="evidence" value="ECO:0007669"/>
    <property type="project" value="TreeGrafter"/>
</dbReference>
<dbReference type="GO" id="GO:0003735">
    <property type="term" value="F:structural constituent of ribosome"/>
    <property type="evidence" value="ECO:0007669"/>
    <property type="project" value="InterPro"/>
</dbReference>
<dbReference type="GO" id="GO:0017148">
    <property type="term" value="P:negative regulation of translation"/>
    <property type="evidence" value="ECO:0007669"/>
    <property type="project" value="TreeGrafter"/>
</dbReference>
<dbReference type="GO" id="GO:0006412">
    <property type="term" value="P:translation"/>
    <property type="evidence" value="ECO:0007669"/>
    <property type="project" value="UniProtKB-UniRule"/>
</dbReference>
<dbReference type="CDD" id="cd00392">
    <property type="entry name" value="Ribosomal_L13"/>
    <property type="match status" value="1"/>
</dbReference>
<dbReference type="FunFam" id="3.90.1180.10:FF:000001">
    <property type="entry name" value="50S ribosomal protein L13"/>
    <property type="match status" value="1"/>
</dbReference>
<dbReference type="Gene3D" id="3.90.1180.10">
    <property type="entry name" value="Ribosomal protein L13"/>
    <property type="match status" value="1"/>
</dbReference>
<dbReference type="HAMAP" id="MF_01366">
    <property type="entry name" value="Ribosomal_uL13"/>
    <property type="match status" value="1"/>
</dbReference>
<dbReference type="InterPro" id="IPR005822">
    <property type="entry name" value="Ribosomal_uL13"/>
</dbReference>
<dbReference type="InterPro" id="IPR005823">
    <property type="entry name" value="Ribosomal_uL13_bac-type"/>
</dbReference>
<dbReference type="InterPro" id="IPR023563">
    <property type="entry name" value="Ribosomal_uL13_CS"/>
</dbReference>
<dbReference type="InterPro" id="IPR036899">
    <property type="entry name" value="Ribosomal_uL13_sf"/>
</dbReference>
<dbReference type="NCBIfam" id="TIGR01066">
    <property type="entry name" value="rplM_bact"/>
    <property type="match status" value="1"/>
</dbReference>
<dbReference type="PANTHER" id="PTHR11545:SF2">
    <property type="entry name" value="LARGE RIBOSOMAL SUBUNIT PROTEIN UL13M"/>
    <property type="match status" value="1"/>
</dbReference>
<dbReference type="PANTHER" id="PTHR11545">
    <property type="entry name" value="RIBOSOMAL PROTEIN L13"/>
    <property type="match status" value="1"/>
</dbReference>
<dbReference type="Pfam" id="PF00572">
    <property type="entry name" value="Ribosomal_L13"/>
    <property type="match status" value="1"/>
</dbReference>
<dbReference type="PIRSF" id="PIRSF002181">
    <property type="entry name" value="Ribosomal_L13"/>
    <property type="match status" value="1"/>
</dbReference>
<dbReference type="SUPFAM" id="SSF52161">
    <property type="entry name" value="Ribosomal protein L13"/>
    <property type="match status" value="1"/>
</dbReference>
<dbReference type="PROSITE" id="PS00783">
    <property type="entry name" value="RIBOSOMAL_L13"/>
    <property type="match status" value="1"/>
</dbReference>
<keyword id="KW-1185">Reference proteome</keyword>
<keyword id="KW-0687">Ribonucleoprotein</keyword>
<keyword id="KW-0689">Ribosomal protein</keyword>
<reference key="1">
    <citation type="submission" date="2005-08" db="EMBL/GenBank/DDBJ databases">
        <title>Complete sequence of Synechococcus sp. CC9902.</title>
        <authorList>
            <person name="Copeland A."/>
            <person name="Lucas S."/>
            <person name="Lapidus A."/>
            <person name="Barry K."/>
            <person name="Detter J.C."/>
            <person name="Glavina T."/>
            <person name="Hammon N."/>
            <person name="Israni S."/>
            <person name="Pitluck S."/>
            <person name="Martinez M."/>
            <person name="Schmutz J."/>
            <person name="Larimer F."/>
            <person name="Land M."/>
            <person name="Kyrpides N."/>
            <person name="Ivanova N."/>
            <person name="Richardson P."/>
        </authorList>
    </citation>
    <scope>NUCLEOTIDE SEQUENCE [LARGE SCALE GENOMIC DNA]</scope>
    <source>
        <strain>CC9902</strain>
    </source>
</reference>
<organism>
    <name type="scientific">Synechococcus sp. (strain CC9902)</name>
    <dbReference type="NCBI Taxonomy" id="316279"/>
    <lineage>
        <taxon>Bacteria</taxon>
        <taxon>Bacillati</taxon>
        <taxon>Cyanobacteriota</taxon>
        <taxon>Cyanophyceae</taxon>
        <taxon>Synechococcales</taxon>
        <taxon>Synechococcaceae</taxon>
        <taxon>Synechococcus</taxon>
    </lineage>
</organism>
<gene>
    <name evidence="1" type="primary">rplM</name>
    <name evidence="1" type="synonym">rpl13</name>
    <name type="ordered locus">Syncc9902_1981</name>
</gene>
<evidence type="ECO:0000255" key="1">
    <source>
        <dbReference type="HAMAP-Rule" id="MF_01366"/>
    </source>
</evidence>
<evidence type="ECO:0000256" key="2">
    <source>
        <dbReference type="SAM" id="MobiDB-lite"/>
    </source>
</evidence>
<evidence type="ECO:0000305" key="3"/>
<name>RL13_SYNS9</name>
<sequence>MNKTSLPPIDSIDRQWYVVDAENQTLGRLATEVASILRGKNNPNFTPHLDTGDFVVVVNAEKIQVSGKKPQQKLYRRHSGRPGGMKVETFESLQERIPERIVEKAIKGMLPHNALGRQMYRKLKVYKGTEHPHSAQKPQPLQLNPSATAK</sequence>
<comment type="function">
    <text evidence="1">This protein is one of the early assembly proteins of the 50S ribosomal subunit, although it is not seen to bind rRNA by itself. It is important during the early stages of 50S assembly.</text>
</comment>
<comment type="subunit">
    <text evidence="1">Part of the 50S ribosomal subunit.</text>
</comment>
<comment type="similarity">
    <text evidence="1">Belongs to the universal ribosomal protein uL13 family.</text>
</comment>
<comment type="sequence caution" evidence="3">
    <conflict type="erroneous initiation">
        <sequence resource="EMBL-CDS" id="ABB26939"/>
    </conflict>
</comment>
<feature type="chain" id="PRO_0000261809" description="Large ribosomal subunit protein uL13">
    <location>
        <begin position="1"/>
        <end position="150"/>
    </location>
</feature>
<feature type="region of interest" description="Disordered" evidence="2">
    <location>
        <begin position="127"/>
        <end position="150"/>
    </location>
</feature>
<feature type="compositionally biased region" description="Polar residues" evidence="2">
    <location>
        <begin position="136"/>
        <end position="150"/>
    </location>
</feature>
<accession>Q3AW67</accession>
<proteinExistence type="inferred from homology"/>
<protein>
    <recommendedName>
        <fullName evidence="1">Large ribosomal subunit protein uL13</fullName>
    </recommendedName>
    <alternativeName>
        <fullName evidence="3">50S ribosomal protein L13</fullName>
    </alternativeName>
</protein>